<sequence>MARGDGHLWTETYDSSTVAFMILGAALVFFMVPGLGFLYSGLARRKSALALIWVVIMATLVGILQWYFWGYSLAFSKTATNNKFIGNLDSFGFRNVYGKISDDSTYPELIYAIFQMMFMCVALSIIAGATAERGKLFPHMVFLFVFATLVYCPITYWIWAPGGWAYQWGVLDWAGGGNIEILSAVAGFVYSYFLGRRKENLLINFRPHNVSMVTLGTSILWFGWLLFNAASSLSPNMRSVYAFMNTCLSATTGGMTWCLLDYRSEKKWSTVGLCSGIICGLVAATPSSGCITLYGSLIQGIIAGVVCNFATKIKYYLKVDDSLDLLAEHGIAGVVGLIFNALFAADWVIGMDGTTKHKGGWLTHNWKQMYIQIAYIGASAGYCAVVTAIICFVLGKIPGVHLRVTEEAEALGLDEDQIGEFAYDYVEVRRDYYQWGVDTDALHTTCNGANSASETNPTEDSQNSSLSSATVSGQNEKSNNPKLHHAKEA</sequence>
<name>MEP3_YEAST</name>
<proteinExistence type="evidence at protein level"/>
<feature type="chain" id="PRO_0000139756" description="Ammonium transporter MEP3">
    <location>
        <begin position="1"/>
        <end position="489"/>
    </location>
</feature>
<feature type="topological domain" description="Extracellular" evidence="1">
    <location>
        <begin position="1"/>
        <end position="17"/>
    </location>
</feature>
<feature type="transmembrane region" description="Helical" evidence="1">
    <location>
        <begin position="18"/>
        <end position="38"/>
    </location>
</feature>
<feature type="topological domain" description="Cytoplasmic" evidence="1">
    <location>
        <begin position="39"/>
        <end position="48"/>
    </location>
</feature>
<feature type="transmembrane region" description="Helical" evidence="1">
    <location>
        <begin position="49"/>
        <end position="69"/>
    </location>
</feature>
<feature type="topological domain" description="Extracellular" evidence="1">
    <location>
        <begin position="70"/>
        <end position="108"/>
    </location>
</feature>
<feature type="transmembrane region" description="Helical" evidence="1">
    <location>
        <begin position="109"/>
        <end position="129"/>
    </location>
</feature>
<feature type="topological domain" description="Cytoplasmic" evidence="1">
    <location>
        <begin position="130"/>
        <end position="139"/>
    </location>
</feature>
<feature type="transmembrane region" description="Helical" evidence="1">
    <location>
        <begin position="140"/>
        <end position="160"/>
    </location>
</feature>
<feature type="topological domain" description="Extracellular" evidence="1">
    <location>
        <begin position="161"/>
        <end position="173"/>
    </location>
</feature>
<feature type="transmembrane region" description="Helical" evidence="1">
    <location>
        <begin position="174"/>
        <end position="194"/>
    </location>
</feature>
<feature type="topological domain" description="Cytoplasmic" evidence="1">
    <location>
        <begin position="195"/>
        <end position="209"/>
    </location>
</feature>
<feature type="transmembrane region" description="Helical" evidence="1">
    <location>
        <begin position="210"/>
        <end position="230"/>
    </location>
</feature>
<feature type="topological domain" description="Extracellular" evidence="1">
    <location>
        <begin position="231"/>
        <end position="239"/>
    </location>
</feature>
<feature type="transmembrane region" description="Helical" evidence="1">
    <location>
        <begin position="240"/>
        <end position="260"/>
    </location>
</feature>
<feature type="topological domain" description="Cytoplasmic" evidence="1">
    <location>
        <begin position="261"/>
        <end position="267"/>
    </location>
</feature>
<feature type="transmembrane region" description="Helical" evidence="1">
    <location>
        <begin position="268"/>
        <end position="288"/>
    </location>
</feature>
<feature type="topological domain" description="Extracellular" evidence="1">
    <location>
        <position position="289"/>
    </location>
</feature>
<feature type="transmembrane region" description="Helical" evidence="1">
    <location>
        <begin position="290"/>
        <end position="310"/>
    </location>
</feature>
<feature type="topological domain" description="Cytoplasmic" evidence="1">
    <location>
        <begin position="311"/>
        <end position="330"/>
    </location>
</feature>
<feature type="transmembrane region" description="Helical" evidence="1">
    <location>
        <begin position="331"/>
        <end position="351"/>
    </location>
</feature>
<feature type="topological domain" description="Extracellular" evidence="1">
    <location>
        <begin position="352"/>
        <end position="372"/>
    </location>
</feature>
<feature type="transmembrane region" description="Helical" evidence="1">
    <location>
        <begin position="373"/>
        <end position="393"/>
    </location>
</feature>
<feature type="topological domain" description="Cytoplasmic" evidence="1">
    <location>
        <begin position="394"/>
        <end position="489"/>
    </location>
</feature>
<feature type="region of interest" description="Disordered" evidence="2">
    <location>
        <begin position="448"/>
        <end position="489"/>
    </location>
</feature>
<feature type="compositionally biased region" description="Polar residues" evidence="2">
    <location>
        <begin position="448"/>
        <end position="481"/>
    </location>
</feature>
<feature type="sequence conflict" description="In Ref. 4; AAT92794." evidence="6" ref="4">
    <original>H</original>
    <variation>P</variation>
    <location>
        <position position="7"/>
    </location>
</feature>
<evidence type="ECO:0000255" key="1"/>
<evidence type="ECO:0000256" key="2">
    <source>
        <dbReference type="SAM" id="MobiDB-lite"/>
    </source>
</evidence>
<evidence type="ECO:0000269" key="3">
    <source>
    </source>
</evidence>
<evidence type="ECO:0000269" key="4">
    <source>
    </source>
</evidence>
<evidence type="ECO:0000269" key="5">
    <source>
    </source>
</evidence>
<evidence type="ECO:0000305" key="6"/>
<comment type="function">
    <text evidence="3 5">Transporter for ammonium (both charged and uncharged NH3 and NH4) to use as a nitrogen source. The affinity of MEP2 is about twenty times higher than that of MEP1. MEP3 has the lowest affinity.</text>
</comment>
<comment type="interaction">
    <interactant intactId="EBI-10729">
        <id>P53390</id>
    </interactant>
    <interactant intactId="EBI-10714">
        <id>P40260</id>
        <label>MEP1</label>
    </interactant>
    <organismsDiffer>false</organismsDiffer>
    <experiments>3</experiments>
</comment>
<comment type="subcellular location">
    <subcellularLocation>
        <location>Membrane</location>
        <topology>Multi-pass membrane protein</topology>
    </subcellularLocation>
</comment>
<comment type="miscellaneous">
    <text evidence="4">Present with 3820 molecules/cell in log phase SD medium.</text>
</comment>
<comment type="similarity">
    <text evidence="6">Belongs to the ammonia transporter channel (TC 1.A.11.2) family.</text>
</comment>
<protein>
    <recommendedName>
        <fullName>Ammonium transporter MEP3</fullName>
    </recommendedName>
</protein>
<organism>
    <name type="scientific">Saccharomyces cerevisiae (strain ATCC 204508 / S288c)</name>
    <name type="common">Baker's yeast</name>
    <dbReference type="NCBI Taxonomy" id="559292"/>
    <lineage>
        <taxon>Eukaryota</taxon>
        <taxon>Fungi</taxon>
        <taxon>Dikarya</taxon>
        <taxon>Ascomycota</taxon>
        <taxon>Saccharomycotina</taxon>
        <taxon>Saccharomycetes</taxon>
        <taxon>Saccharomycetales</taxon>
        <taxon>Saccharomycetaceae</taxon>
        <taxon>Saccharomyces</taxon>
    </lineage>
</organism>
<gene>
    <name type="primary">MEP3</name>
    <name type="synonym">AMT3</name>
    <name type="ordered locus">YPR138C</name>
    <name type="ORF">P9659.14</name>
</gene>
<keyword id="KW-0924">Ammonia transport</keyword>
<keyword id="KW-0472">Membrane</keyword>
<keyword id="KW-1185">Reference proteome</keyword>
<keyword id="KW-0812">Transmembrane</keyword>
<keyword id="KW-1133">Transmembrane helix</keyword>
<keyword id="KW-0813">Transport</keyword>
<reference key="1">
    <citation type="journal article" date="1997" name="Mol. Cell. Biol.">
        <title>A family of ammonium transporters in Saccharomyces cerevisiae.</title>
        <authorList>
            <person name="Marini A.-M."/>
            <person name="Soussi-Boudekou S."/>
            <person name="Vissers S."/>
            <person name="Andre B."/>
        </authorList>
    </citation>
    <scope>NUCLEOTIDE SEQUENCE [GENOMIC DNA]</scope>
    <scope>FUNCTION</scope>
    <source>
        <strain>Sigma 1278B</strain>
    </source>
</reference>
<reference key="2">
    <citation type="journal article" date="1997" name="Nature">
        <title>The nucleotide sequence of Saccharomyces cerevisiae chromosome XVI.</title>
        <authorList>
            <person name="Bussey H."/>
            <person name="Storms R.K."/>
            <person name="Ahmed A."/>
            <person name="Albermann K."/>
            <person name="Allen E."/>
            <person name="Ansorge W."/>
            <person name="Araujo R."/>
            <person name="Aparicio A."/>
            <person name="Barrell B.G."/>
            <person name="Badcock K."/>
            <person name="Benes V."/>
            <person name="Botstein D."/>
            <person name="Bowman S."/>
            <person name="Brueckner M."/>
            <person name="Carpenter J."/>
            <person name="Cherry J.M."/>
            <person name="Chung E."/>
            <person name="Churcher C.M."/>
            <person name="Coster F."/>
            <person name="Davis K."/>
            <person name="Davis R.W."/>
            <person name="Dietrich F.S."/>
            <person name="Delius H."/>
            <person name="DiPaolo T."/>
            <person name="Dubois E."/>
            <person name="Duesterhoeft A."/>
            <person name="Duncan M."/>
            <person name="Floeth M."/>
            <person name="Fortin N."/>
            <person name="Friesen J.D."/>
            <person name="Fritz C."/>
            <person name="Goffeau A."/>
            <person name="Hall J."/>
            <person name="Hebling U."/>
            <person name="Heumann K."/>
            <person name="Hilbert H."/>
            <person name="Hillier L.W."/>
            <person name="Hunicke-Smith S."/>
            <person name="Hyman R.W."/>
            <person name="Johnston M."/>
            <person name="Kalman S."/>
            <person name="Kleine K."/>
            <person name="Komp C."/>
            <person name="Kurdi O."/>
            <person name="Lashkari D."/>
            <person name="Lew H."/>
            <person name="Lin A."/>
            <person name="Lin D."/>
            <person name="Louis E.J."/>
            <person name="Marathe R."/>
            <person name="Messenguy F."/>
            <person name="Mewes H.-W."/>
            <person name="Mirtipati S."/>
            <person name="Moestl D."/>
            <person name="Mueller-Auer S."/>
            <person name="Namath A."/>
            <person name="Nentwich U."/>
            <person name="Oefner P."/>
            <person name="Pearson D."/>
            <person name="Petel F.X."/>
            <person name="Pohl T.M."/>
            <person name="Purnelle B."/>
            <person name="Rajandream M.A."/>
            <person name="Rechmann S."/>
            <person name="Rieger M."/>
            <person name="Riles L."/>
            <person name="Roberts D."/>
            <person name="Schaefer M."/>
            <person name="Scharfe M."/>
            <person name="Scherens B."/>
            <person name="Schramm S."/>
            <person name="Schroeder M."/>
            <person name="Sdicu A.-M."/>
            <person name="Tettelin H."/>
            <person name="Urrestarazu L.A."/>
            <person name="Ushinsky S."/>
            <person name="Vierendeels F."/>
            <person name="Vissers S."/>
            <person name="Voss H."/>
            <person name="Walsh S.V."/>
            <person name="Wambutt R."/>
            <person name="Wang Y."/>
            <person name="Wedler E."/>
            <person name="Wedler H."/>
            <person name="Winnett E."/>
            <person name="Zhong W.-W."/>
            <person name="Zollner A."/>
            <person name="Vo D.H."/>
            <person name="Hani J."/>
        </authorList>
    </citation>
    <scope>NUCLEOTIDE SEQUENCE [LARGE SCALE GENOMIC DNA]</scope>
    <source>
        <strain>ATCC 204508 / S288c</strain>
    </source>
</reference>
<reference key="3">
    <citation type="journal article" date="2014" name="G3 (Bethesda)">
        <title>The reference genome sequence of Saccharomyces cerevisiae: Then and now.</title>
        <authorList>
            <person name="Engel S.R."/>
            <person name="Dietrich F.S."/>
            <person name="Fisk D.G."/>
            <person name="Binkley G."/>
            <person name="Balakrishnan R."/>
            <person name="Costanzo M.C."/>
            <person name="Dwight S.S."/>
            <person name="Hitz B.C."/>
            <person name="Karra K."/>
            <person name="Nash R.S."/>
            <person name="Weng S."/>
            <person name="Wong E.D."/>
            <person name="Lloyd P."/>
            <person name="Skrzypek M.S."/>
            <person name="Miyasato S.R."/>
            <person name="Simison M."/>
            <person name="Cherry J.M."/>
        </authorList>
    </citation>
    <scope>GENOME REANNOTATION</scope>
    <source>
        <strain>ATCC 204508 / S288c</strain>
    </source>
</reference>
<reference key="4">
    <citation type="journal article" date="2007" name="Genome Res.">
        <title>Approaching a complete repository of sequence-verified protein-encoding clones for Saccharomyces cerevisiae.</title>
        <authorList>
            <person name="Hu Y."/>
            <person name="Rolfs A."/>
            <person name="Bhullar B."/>
            <person name="Murthy T.V.S."/>
            <person name="Zhu C."/>
            <person name="Berger M.F."/>
            <person name="Camargo A.A."/>
            <person name="Kelley F."/>
            <person name="McCarron S."/>
            <person name="Jepson D."/>
            <person name="Richardson A."/>
            <person name="Raphael J."/>
            <person name="Moreira D."/>
            <person name="Taycher E."/>
            <person name="Zuo D."/>
            <person name="Mohr S."/>
            <person name="Kane M.F."/>
            <person name="Williamson J."/>
            <person name="Simpson A.J.G."/>
            <person name="Bulyk M.L."/>
            <person name="Harlow E."/>
            <person name="Marsischky G."/>
            <person name="Kolodner R.D."/>
            <person name="LaBaer J."/>
        </authorList>
    </citation>
    <scope>NUCLEOTIDE SEQUENCE [GENOMIC DNA]</scope>
    <source>
        <strain>ATCC 204508 / S288c</strain>
    </source>
</reference>
<reference key="5">
    <citation type="journal article" date="2001" name="Mol. Cell. Biol.">
        <title>Evidence that fungal MEP proteins mediate diffusion of the uncharged species NH(3) across the cytoplasmic membrane.</title>
        <authorList>
            <person name="Soupene E."/>
            <person name="Ramirez R.M."/>
            <person name="Kustu S."/>
        </authorList>
    </citation>
    <scope>FUNCTION</scope>
</reference>
<reference key="6">
    <citation type="journal article" date="2003" name="Nature">
        <title>Global analysis of protein expression in yeast.</title>
        <authorList>
            <person name="Ghaemmaghami S."/>
            <person name="Huh W.-K."/>
            <person name="Bower K."/>
            <person name="Howson R.W."/>
            <person name="Belle A."/>
            <person name="Dephoure N."/>
            <person name="O'Shea E.K."/>
            <person name="Weissman J.S."/>
        </authorList>
    </citation>
    <scope>LEVEL OF PROTEIN EXPRESSION [LARGE SCALE ANALYSIS]</scope>
</reference>
<reference key="7">
    <citation type="journal article" date="2006" name="Proc. Natl. Acad. Sci. U.S.A.">
        <title>A global topology map of the Saccharomyces cerevisiae membrane proteome.</title>
        <authorList>
            <person name="Kim H."/>
            <person name="Melen K."/>
            <person name="Oesterberg M."/>
            <person name="von Heijne G."/>
        </authorList>
    </citation>
    <scope>TOPOLOGY [LARGE SCALE ANALYSIS]</scope>
    <source>
        <strain>ATCC 208353 / W303-1A</strain>
    </source>
</reference>
<accession>P53390</accession>
<accession>D6W4D6</accession>
<accession>Q6B2F5</accession>
<dbReference type="EMBL" id="U40829">
    <property type="protein sequence ID" value="AAB68278.1"/>
    <property type="molecule type" value="Genomic_DNA"/>
</dbReference>
<dbReference type="EMBL" id="AY692775">
    <property type="protein sequence ID" value="AAT92794.1"/>
    <property type="molecule type" value="Genomic_DNA"/>
</dbReference>
<dbReference type="EMBL" id="BK006949">
    <property type="protein sequence ID" value="DAA11552.1"/>
    <property type="molecule type" value="Genomic_DNA"/>
</dbReference>
<dbReference type="PIR" id="S69027">
    <property type="entry name" value="S69027"/>
</dbReference>
<dbReference type="RefSeq" id="NP_015464.1">
    <property type="nucleotide sequence ID" value="NM_001184235.1"/>
</dbReference>
<dbReference type="SMR" id="P53390"/>
<dbReference type="BioGRID" id="36307">
    <property type="interactions" value="48"/>
</dbReference>
<dbReference type="DIP" id="DIP-4909N"/>
<dbReference type="FunCoup" id="P53390">
    <property type="interactions" value="440"/>
</dbReference>
<dbReference type="IntAct" id="P53390">
    <property type="interactions" value="23"/>
</dbReference>
<dbReference type="MINT" id="P53390"/>
<dbReference type="STRING" id="4932.YPR138C"/>
<dbReference type="PaxDb" id="4932-YPR138C"/>
<dbReference type="PeptideAtlas" id="P53390"/>
<dbReference type="EnsemblFungi" id="YPR138C_mRNA">
    <property type="protein sequence ID" value="YPR138C"/>
    <property type="gene ID" value="YPR138C"/>
</dbReference>
<dbReference type="GeneID" id="856260"/>
<dbReference type="KEGG" id="sce:YPR138C"/>
<dbReference type="AGR" id="SGD:S000006342"/>
<dbReference type="SGD" id="S000006342">
    <property type="gene designation" value="MEP3"/>
</dbReference>
<dbReference type="VEuPathDB" id="FungiDB:YPR138C"/>
<dbReference type="eggNOG" id="KOG0682">
    <property type="taxonomic scope" value="Eukaryota"/>
</dbReference>
<dbReference type="GeneTree" id="ENSGT00530000064546"/>
<dbReference type="HOGENOM" id="CLU_000445_33_0_1"/>
<dbReference type="InParanoid" id="P53390"/>
<dbReference type="OMA" id="FNAGSWL"/>
<dbReference type="OrthoDB" id="534912at2759"/>
<dbReference type="BioCyc" id="YEAST:G3O-34273-MONOMER"/>
<dbReference type="BioGRID-ORCS" id="856260">
    <property type="hits" value="0 hits in 10 CRISPR screens"/>
</dbReference>
<dbReference type="PRO" id="PR:P53390"/>
<dbReference type="Proteomes" id="UP000002311">
    <property type="component" value="Chromosome XVI"/>
</dbReference>
<dbReference type="RNAct" id="P53390">
    <property type="molecule type" value="protein"/>
</dbReference>
<dbReference type="GO" id="GO:0005783">
    <property type="term" value="C:endoplasmic reticulum"/>
    <property type="evidence" value="ECO:0007005"/>
    <property type="project" value="SGD"/>
</dbReference>
<dbReference type="GO" id="GO:0005886">
    <property type="term" value="C:plasma membrane"/>
    <property type="evidence" value="ECO:0000318"/>
    <property type="project" value="GO_Central"/>
</dbReference>
<dbReference type="GO" id="GO:0008519">
    <property type="term" value="F:ammonium channel activity"/>
    <property type="evidence" value="ECO:0000314"/>
    <property type="project" value="SGD"/>
</dbReference>
<dbReference type="GO" id="GO:0072488">
    <property type="term" value="P:ammonium transmembrane transport"/>
    <property type="evidence" value="ECO:0000315"/>
    <property type="project" value="SGD"/>
</dbReference>
<dbReference type="GO" id="GO:0019740">
    <property type="term" value="P:nitrogen utilization"/>
    <property type="evidence" value="ECO:0000315"/>
    <property type="project" value="SGD"/>
</dbReference>
<dbReference type="FunFam" id="1.10.3430.10:FF:000003">
    <property type="entry name" value="Ammonium transporter"/>
    <property type="match status" value="1"/>
</dbReference>
<dbReference type="Gene3D" id="1.10.3430.10">
    <property type="entry name" value="Ammonium transporter AmtB like domains"/>
    <property type="match status" value="1"/>
</dbReference>
<dbReference type="InterPro" id="IPR029020">
    <property type="entry name" value="Ammonium/urea_transptr"/>
</dbReference>
<dbReference type="InterPro" id="IPR001905">
    <property type="entry name" value="Ammonium_transpt"/>
</dbReference>
<dbReference type="InterPro" id="IPR018047">
    <property type="entry name" value="Ammonium_transpt_CS"/>
</dbReference>
<dbReference type="InterPro" id="IPR024041">
    <property type="entry name" value="NH4_transpt_AmtB-like_dom"/>
</dbReference>
<dbReference type="NCBIfam" id="TIGR00836">
    <property type="entry name" value="amt"/>
    <property type="match status" value="1"/>
</dbReference>
<dbReference type="PANTHER" id="PTHR43029:SF4">
    <property type="entry name" value="AMMONIUM TRANSPORTER MEP1-RELATED"/>
    <property type="match status" value="1"/>
</dbReference>
<dbReference type="PANTHER" id="PTHR43029">
    <property type="entry name" value="AMMONIUM TRANSPORTER MEP2"/>
    <property type="match status" value="1"/>
</dbReference>
<dbReference type="Pfam" id="PF00909">
    <property type="entry name" value="Ammonium_transp"/>
    <property type="match status" value="1"/>
</dbReference>
<dbReference type="SUPFAM" id="SSF111352">
    <property type="entry name" value="Ammonium transporter"/>
    <property type="match status" value="1"/>
</dbReference>
<dbReference type="PROSITE" id="PS01219">
    <property type="entry name" value="AMMONIUM_TRANSP"/>
    <property type="match status" value="1"/>
</dbReference>